<name>SURE_HERA2</name>
<keyword id="KW-0963">Cytoplasm</keyword>
<keyword id="KW-0378">Hydrolase</keyword>
<keyword id="KW-0479">Metal-binding</keyword>
<keyword id="KW-0547">Nucleotide-binding</keyword>
<proteinExistence type="inferred from homology"/>
<dbReference type="EC" id="3.1.3.5" evidence="1"/>
<dbReference type="EMBL" id="CP000875">
    <property type="protein sequence ID" value="ABX07321.1"/>
    <property type="molecule type" value="Genomic_DNA"/>
</dbReference>
<dbReference type="SMR" id="A9B1D4"/>
<dbReference type="STRING" id="316274.Haur_4690"/>
<dbReference type="KEGG" id="hau:Haur_4690"/>
<dbReference type="eggNOG" id="COG0496">
    <property type="taxonomic scope" value="Bacteria"/>
</dbReference>
<dbReference type="HOGENOM" id="CLU_045192_1_2_0"/>
<dbReference type="InParanoid" id="A9B1D4"/>
<dbReference type="Proteomes" id="UP000000787">
    <property type="component" value="Chromosome"/>
</dbReference>
<dbReference type="GO" id="GO:0005737">
    <property type="term" value="C:cytoplasm"/>
    <property type="evidence" value="ECO:0007669"/>
    <property type="project" value="UniProtKB-SubCell"/>
</dbReference>
<dbReference type="GO" id="GO:0008254">
    <property type="term" value="F:3'-nucleotidase activity"/>
    <property type="evidence" value="ECO:0007669"/>
    <property type="project" value="TreeGrafter"/>
</dbReference>
<dbReference type="GO" id="GO:0008253">
    <property type="term" value="F:5'-nucleotidase activity"/>
    <property type="evidence" value="ECO:0007669"/>
    <property type="project" value="UniProtKB-UniRule"/>
</dbReference>
<dbReference type="GO" id="GO:0004309">
    <property type="term" value="F:exopolyphosphatase activity"/>
    <property type="evidence" value="ECO:0007669"/>
    <property type="project" value="TreeGrafter"/>
</dbReference>
<dbReference type="GO" id="GO:0046872">
    <property type="term" value="F:metal ion binding"/>
    <property type="evidence" value="ECO:0007669"/>
    <property type="project" value="UniProtKB-UniRule"/>
</dbReference>
<dbReference type="GO" id="GO:0000166">
    <property type="term" value="F:nucleotide binding"/>
    <property type="evidence" value="ECO:0007669"/>
    <property type="project" value="UniProtKB-KW"/>
</dbReference>
<dbReference type="FunFam" id="3.40.1210.10:FF:000001">
    <property type="entry name" value="5'/3'-nucleotidase SurE"/>
    <property type="match status" value="1"/>
</dbReference>
<dbReference type="Gene3D" id="3.40.1210.10">
    <property type="entry name" value="Survival protein SurE-like phosphatase/nucleotidase"/>
    <property type="match status" value="1"/>
</dbReference>
<dbReference type="HAMAP" id="MF_00060">
    <property type="entry name" value="SurE"/>
    <property type="match status" value="1"/>
</dbReference>
<dbReference type="InterPro" id="IPR030048">
    <property type="entry name" value="SurE"/>
</dbReference>
<dbReference type="InterPro" id="IPR002828">
    <property type="entry name" value="SurE-like_Pase/nucleotidase"/>
</dbReference>
<dbReference type="InterPro" id="IPR036523">
    <property type="entry name" value="SurE-like_sf"/>
</dbReference>
<dbReference type="NCBIfam" id="NF001490">
    <property type="entry name" value="PRK00346.1-4"/>
    <property type="match status" value="1"/>
</dbReference>
<dbReference type="NCBIfam" id="TIGR00087">
    <property type="entry name" value="surE"/>
    <property type="match status" value="1"/>
</dbReference>
<dbReference type="PANTHER" id="PTHR30457">
    <property type="entry name" value="5'-NUCLEOTIDASE SURE"/>
    <property type="match status" value="1"/>
</dbReference>
<dbReference type="PANTHER" id="PTHR30457:SF12">
    <property type="entry name" value="5'_3'-NUCLEOTIDASE SURE"/>
    <property type="match status" value="1"/>
</dbReference>
<dbReference type="Pfam" id="PF01975">
    <property type="entry name" value="SurE"/>
    <property type="match status" value="1"/>
</dbReference>
<dbReference type="SUPFAM" id="SSF64167">
    <property type="entry name" value="SurE-like"/>
    <property type="match status" value="1"/>
</dbReference>
<organism>
    <name type="scientific">Herpetosiphon aurantiacus (strain ATCC 23779 / DSM 785 / 114-95)</name>
    <dbReference type="NCBI Taxonomy" id="316274"/>
    <lineage>
        <taxon>Bacteria</taxon>
        <taxon>Bacillati</taxon>
        <taxon>Chloroflexota</taxon>
        <taxon>Chloroflexia</taxon>
        <taxon>Herpetosiphonales</taxon>
        <taxon>Herpetosiphonaceae</taxon>
        <taxon>Herpetosiphon</taxon>
    </lineage>
</organism>
<protein>
    <recommendedName>
        <fullName evidence="1">5'-nucleotidase SurE</fullName>
        <ecNumber evidence="1">3.1.3.5</ecNumber>
    </recommendedName>
    <alternativeName>
        <fullName evidence="1">Nucleoside 5'-monophosphate phosphohydrolase</fullName>
    </alternativeName>
</protein>
<feature type="chain" id="PRO_1000092011" description="5'-nucleotidase SurE">
    <location>
        <begin position="1"/>
        <end position="255"/>
    </location>
</feature>
<feature type="binding site" evidence="1">
    <location>
        <position position="8"/>
    </location>
    <ligand>
        <name>a divalent metal cation</name>
        <dbReference type="ChEBI" id="CHEBI:60240"/>
    </ligand>
</feature>
<feature type="binding site" evidence="1">
    <location>
        <position position="9"/>
    </location>
    <ligand>
        <name>a divalent metal cation</name>
        <dbReference type="ChEBI" id="CHEBI:60240"/>
    </ligand>
</feature>
<feature type="binding site" evidence="1">
    <location>
        <position position="39"/>
    </location>
    <ligand>
        <name>a divalent metal cation</name>
        <dbReference type="ChEBI" id="CHEBI:60240"/>
    </ligand>
</feature>
<feature type="binding site" evidence="1">
    <location>
        <position position="95"/>
    </location>
    <ligand>
        <name>a divalent metal cation</name>
        <dbReference type="ChEBI" id="CHEBI:60240"/>
    </ligand>
</feature>
<comment type="function">
    <text evidence="1">Nucleotidase that shows phosphatase activity on nucleoside 5'-monophosphates.</text>
</comment>
<comment type="catalytic activity">
    <reaction evidence="1">
        <text>a ribonucleoside 5'-phosphate + H2O = a ribonucleoside + phosphate</text>
        <dbReference type="Rhea" id="RHEA:12484"/>
        <dbReference type="ChEBI" id="CHEBI:15377"/>
        <dbReference type="ChEBI" id="CHEBI:18254"/>
        <dbReference type="ChEBI" id="CHEBI:43474"/>
        <dbReference type="ChEBI" id="CHEBI:58043"/>
        <dbReference type="EC" id="3.1.3.5"/>
    </reaction>
</comment>
<comment type="cofactor">
    <cofactor evidence="1">
        <name>a divalent metal cation</name>
        <dbReference type="ChEBI" id="CHEBI:60240"/>
    </cofactor>
    <text evidence="1">Binds 1 divalent metal cation per subunit.</text>
</comment>
<comment type="subcellular location">
    <subcellularLocation>
        <location evidence="1">Cytoplasm</location>
    </subcellularLocation>
</comment>
<comment type="similarity">
    <text evidence="1">Belongs to the SurE nucleotidase family.</text>
</comment>
<evidence type="ECO:0000255" key="1">
    <source>
        <dbReference type="HAMAP-Rule" id="MF_00060"/>
    </source>
</evidence>
<accession>A9B1D4</accession>
<sequence length="255" mass="27124">MNILLSNDDGVHSPGLLALKCQLEQLGCVTVVAPERNWSAGSHSRTLFAPLRVNEVQLADGSPALACDGSPADCVGLALLGVMDHRPDLVVSGINLGANLGHDVLYSGTVAAAMEGLVVGIRSIAVSLVDGYKPGSDFSVAADWARRIAATAMELQLPSDILLNVNVPQGSAEIVNDAKVTRLGHRIYRDELIKRLDPRGRPYYWVGGAAPDGKPDDGTDFGAVANNHVSITPLHFDMTNLDWVQRLSTAIWNNA</sequence>
<gene>
    <name evidence="1" type="primary">surE</name>
    <name type="ordered locus">Haur_4690</name>
</gene>
<reference key="1">
    <citation type="journal article" date="2011" name="Stand. Genomic Sci.">
        <title>Complete genome sequence of the filamentous gliding predatory bacterium Herpetosiphon aurantiacus type strain (114-95(T)).</title>
        <authorList>
            <person name="Kiss H."/>
            <person name="Nett M."/>
            <person name="Domin N."/>
            <person name="Martin K."/>
            <person name="Maresca J.A."/>
            <person name="Copeland A."/>
            <person name="Lapidus A."/>
            <person name="Lucas S."/>
            <person name="Berry K.W."/>
            <person name="Glavina Del Rio T."/>
            <person name="Dalin E."/>
            <person name="Tice H."/>
            <person name="Pitluck S."/>
            <person name="Richardson P."/>
            <person name="Bruce D."/>
            <person name="Goodwin L."/>
            <person name="Han C."/>
            <person name="Detter J.C."/>
            <person name="Schmutz J."/>
            <person name="Brettin T."/>
            <person name="Land M."/>
            <person name="Hauser L."/>
            <person name="Kyrpides N.C."/>
            <person name="Ivanova N."/>
            <person name="Goeker M."/>
            <person name="Woyke T."/>
            <person name="Klenk H.P."/>
            <person name="Bryant D.A."/>
        </authorList>
    </citation>
    <scope>NUCLEOTIDE SEQUENCE [LARGE SCALE GENOMIC DNA]</scope>
    <source>
        <strain>ATCC 23779 / DSM 785 / 114-95</strain>
    </source>
</reference>